<keyword id="KW-0002">3D-structure</keyword>
<keyword id="KW-0007">Acetylation</keyword>
<keyword id="KW-0010">Activator</keyword>
<keyword id="KW-0025">Alternative splicing</keyword>
<keyword id="KW-0090">Biological rhythms</keyword>
<keyword id="KW-0963">Cytoplasm</keyword>
<keyword id="KW-0206">Cytoskeleton</keyword>
<keyword id="KW-0238">DNA-binding</keyword>
<keyword id="KW-1017">Isopeptide bond</keyword>
<keyword id="KW-0479">Metal-binding</keyword>
<keyword id="KW-0539">Nucleus</keyword>
<keyword id="KW-0597">Phosphoprotein</keyword>
<keyword id="KW-1267">Proteomics identification</keyword>
<keyword id="KW-1185">Reference proteome</keyword>
<keyword id="KW-0678">Repressor</keyword>
<keyword id="KW-0804">Transcription</keyword>
<keyword id="KW-0805">Transcription regulation</keyword>
<keyword id="KW-0832">Ubl conjugation</keyword>
<keyword id="KW-0862">Zinc</keyword>
<keyword id="KW-0863">Zinc-finger</keyword>
<evidence type="ECO:0000250" key="1">
    <source>
        <dbReference type="UniProtKB" id="Q8K4B0"/>
    </source>
</evidence>
<evidence type="ECO:0000255" key="2"/>
<evidence type="ECO:0000255" key="3">
    <source>
        <dbReference type="PROSITE-ProRule" id="PRU00370"/>
    </source>
</evidence>
<evidence type="ECO:0000255" key="4">
    <source>
        <dbReference type="PROSITE-ProRule" id="PRU00512"/>
    </source>
</evidence>
<evidence type="ECO:0000255" key="5">
    <source>
        <dbReference type="PROSITE-ProRule" id="PRU00624"/>
    </source>
</evidence>
<evidence type="ECO:0000256" key="6">
    <source>
        <dbReference type="SAM" id="MobiDB-lite"/>
    </source>
</evidence>
<evidence type="ECO:0000269" key="7">
    <source>
    </source>
</evidence>
<evidence type="ECO:0000269" key="8">
    <source>
    </source>
</evidence>
<evidence type="ECO:0000269" key="9">
    <source>
    </source>
</evidence>
<evidence type="ECO:0000269" key="10">
    <source>
    </source>
</evidence>
<evidence type="ECO:0000269" key="11">
    <source>
    </source>
</evidence>
<evidence type="ECO:0000269" key="12">
    <source>
    </source>
</evidence>
<evidence type="ECO:0000269" key="13">
    <source>
    </source>
</evidence>
<evidence type="ECO:0000269" key="14">
    <source>
    </source>
</evidence>
<evidence type="ECO:0000269" key="15">
    <source>
    </source>
</evidence>
<evidence type="ECO:0000269" key="16">
    <source>
    </source>
</evidence>
<evidence type="ECO:0000269" key="17">
    <source>
    </source>
</evidence>
<evidence type="ECO:0000269" key="18">
    <source>
    </source>
</evidence>
<evidence type="ECO:0000269" key="19">
    <source>
    </source>
</evidence>
<evidence type="ECO:0000269" key="20">
    <source>
    </source>
</evidence>
<evidence type="ECO:0000269" key="21">
    <source>
    </source>
</evidence>
<evidence type="ECO:0000269" key="22">
    <source>
    </source>
</evidence>
<evidence type="ECO:0000269" key="23">
    <source>
    </source>
</evidence>
<evidence type="ECO:0000269" key="24">
    <source>
    </source>
</evidence>
<evidence type="ECO:0000269" key="25">
    <source>
    </source>
</evidence>
<evidence type="ECO:0000269" key="26">
    <source>
    </source>
</evidence>
<evidence type="ECO:0000269" key="27">
    <source>
    </source>
</evidence>
<evidence type="ECO:0000269" key="28">
    <source>
    </source>
</evidence>
<evidence type="ECO:0000269" key="29">
    <source>
    </source>
</evidence>
<evidence type="ECO:0000303" key="30">
    <source>
    </source>
</evidence>
<evidence type="ECO:0000303" key="31">
    <source ref="6"/>
</evidence>
<evidence type="ECO:0000305" key="32"/>
<evidence type="ECO:0007744" key="33">
    <source>
        <dbReference type="PDB" id="4PBY"/>
    </source>
</evidence>
<evidence type="ECO:0007744" key="34">
    <source>
        <dbReference type="PDB" id="4PBZ"/>
    </source>
</evidence>
<evidence type="ECO:0007744" key="35">
    <source>
        <dbReference type="PDB" id="4PC0"/>
    </source>
</evidence>
<evidence type="ECO:0007744" key="36">
    <source>
    </source>
</evidence>
<evidence type="ECO:0007744" key="37">
    <source>
    </source>
</evidence>
<evidence type="ECO:0007744" key="38">
    <source>
    </source>
</evidence>
<evidence type="ECO:0007744" key="39">
    <source>
    </source>
</evidence>
<evidence type="ECO:0007744" key="40">
    <source>
    </source>
</evidence>
<evidence type="ECO:0007744" key="41">
    <source>
    </source>
</evidence>
<evidence type="ECO:0007744" key="42">
    <source>
    </source>
</evidence>
<evidence type="ECO:0007744" key="43">
    <source>
    </source>
</evidence>
<evidence type="ECO:0007829" key="44">
    <source>
        <dbReference type="PDB" id="4BKX"/>
    </source>
</evidence>
<evidence type="ECO:0007829" key="45">
    <source>
        <dbReference type="PDB" id="4PBZ"/>
    </source>
</evidence>
<evidence type="ECO:0007829" key="46">
    <source>
        <dbReference type="PDB" id="6G16"/>
    </source>
</evidence>
<feature type="chain" id="PRO_0000083493" description="Metastasis-associated protein MTA1">
    <location>
        <begin position="1"/>
        <end position="715"/>
    </location>
</feature>
<feature type="domain" description="BAH" evidence="3">
    <location>
        <begin position="1"/>
        <end position="164"/>
    </location>
</feature>
<feature type="domain" description="ELM2" evidence="4">
    <location>
        <begin position="165"/>
        <end position="276"/>
    </location>
</feature>
<feature type="domain" description="SANT" evidence="5">
    <location>
        <begin position="283"/>
        <end position="335"/>
    </location>
</feature>
<feature type="zinc finger region" description="GATA-type; atypical">
    <location>
        <begin position="393"/>
        <end position="420"/>
    </location>
</feature>
<feature type="region of interest" description="Disordered" evidence="6">
    <location>
        <begin position="435"/>
        <end position="460"/>
    </location>
</feature>
<feature type="region of interest" description="Interaction with RBBP4" evidence="22">
    <location>
        <begin position="656"/>
        <end position="686"/>
    </location>
</feature>
<feature type="region of interest" description="Disordered" evidence="6">
    <location>
        <begin position="673"/>
        <end position="715"/>
    </location>
</feature>
<feature type="short sequence motif" description="SH3-binding" evidence="2">
    <location>
        <begin position="545"/>
        <end position="552"/>
    </location>
</feature>
<feature type="short sequence motif" description="SH3-binding" evidence="2">
    <location>
        <begin position="696"/>
        <end position="705"/>
    </location>
</feature>
<feature type="short sequence motif" description="SUMO interaction motif 1 (SIM); crucial for efficient sumoylation">
    <location>
        <begin position="711"/>
        <end position="715"/>
    </location>
</feature>
<feature type="modified residue" description="Phosphoserine" evidence="36 37 38 39 40 41 42">
    <location>
        <position position="386"/>
    </location>
</feature>
<feature type="modified residue" description="Phosphoserine" evidence="40 41">
    <location>
        <position position="446"/>
    </location>
</feature>
<feature type="modified residue" description="Phosphoserine" evidence="37 40 41 42">
    <location>
        <position position="449"/>
    </location>
</feature>
<feature type="modified residue" description="Phosphoserine" evidence="37 39 40 41 42">
    <location>
        <position position="522"/>
    </location>
</feature>
<feature type="modified residue" description="Phosphothreonine" evidence="36 37 39 42">
    <location>
        <position position="564"/>
    </location>
</feature>
<feature type="modified residue" description="Phosphoserine" evidence="37 39 40 41 42">
    <location>
        <position position="576"/>
    </location>
</feature>
<feature type="modified residue" description="Phosphothreonine" evidence="39 40 41">
    <location>
        <position position="578"/>
    </location>
</feature>
<feature type="modified residue" description="N6-acetyllysine; alternate" evidence="13 14 16">
    <location>
        <position position="626"/>
    </location>
</feature>
<feature type="modified residue" description="Phosphoserine" evidence="41">
    <location>
        <position position="639"/>
    </location>
</feature>
<feature type="cross-link" description="Glycyl lysine isopeptide (Lys-Gly) (interchain with G-Cter in ubiquitin)" evidence="16">
    <location>
        <position position="182"/>
    </location>
</feature>
<feature type="cross-link" description="Glycyl lysine isopeptide (Lys-Gly) (interchain with G-Cter in SUMO2 and SUMO3)">
    <location>
        <position position="509"/>
    </location>
</feature>
<feature type="cross-link" description="Glycyl lysine isopeptide (Lys-Gly) (interchain with G-Cter in SUMO2)" evidence="43">
    <location>
        <position position="549"/>
    </location>
</feature>
<feature type="cross-link" description="Glycyl lysine isopeptide (Lys-Gly) (interchain with G-Cter in ubiquitin); alternate" evidence="16">
    <location>
        <position position="626"/>
    </location>
</feature>
<feature type="splice variant" id="VSP_042207" description="In isoform 3." evidence="31">
    <original>TLSVCYKAGPGADNGEEG</original>
    <variation>R</variation>
    <location>
        <begin position="64"/>
        <end position="81"/>
    </location>
</feature>
<feature type="splice variant" id="VSP_001601" description="In isoform Short." evidence="30">
    <original>TTQSYQWYSWGPPNMQCRLCASCWTYWKKYGGL</original>
    <variation>MSSLRILLDILEEIWWLENANPVRWREARTKPQ</variation>
    <location>
        <begin position="398"/>
        <end position="430"/>
    </location>
</feature>
<feature type="splice variant" id="VSP_001602" description="In isoform Short." evidence="30">
    <location>
        <begin position="431"/>
        <end position="715"/>
    </location>
</feature>
<feature type="sequence variant" id="VAR_055847" description="In dbSNP:rs4983413.">
    <original>V</original>
    <variation>I</variation>
    <location>
        <position position="372"/>
    </location>
</feature>
<feature type="sequence variant" id="VAR_058965" description="In dbSNP:rs13707." evidence="10 27 28">
    <original>A</original>
    <variation>T</variation>
    <location>
        <position position="612"/>
    </location>
</feature>
<feature type="mutagenesis site" description="Reduced ubiquitination. Significant reduction in ubiquitination; when associated with A-626." evidence="16">
    <original>K</original>
    <variation>A</variation>
    <location>
        <position position="182"/>
    </location>
</feature>
<feature type="mutagenesis site" description="Reduced sumoylation and transcriptional corepressor activity." evidence="19">
    <original>K</original>
    <variation>R</variation>
    <location>
        <position position="509"/>
    </location>
</feature>
<feature type="mutagenesis site" description="Loss of acetylation and transcriptional coactivator activity. Reduced ubiquitination. Significant reduction in ubiquitination; when associated with A-182." evidence="13 14 16">
    <original>K</original>
    <variation>A</variation>
    <location>
        <position position="626"/>
    </location>
</feature>
<feature type="mutagenesis site" description="Significant loss of interaction with SUMO1 and SUMO2 and reduced transcriptional corepressor activity." evidence="19">
    <original>IVI</original>
    <variation>AAA</variation>
    <location>
        <begin position="711"/>
        <end position="713"/>
    </location>
</feature>
<feature type="sequence conflict" description="In Ref. 1; AAA78935." evidence="32" ref="1">
    <original>H</original>
    <variation>N</variation>
    <location>
        <position position="498"/>
    </location>
</feature>
<feature type="sequence conflict" description="In Ref. 5; AAI42942." evidence="32" ref="5">
    <original>P</original>
    <variation>R</variation>
    <location>
        <position position="545"/>
    </location>
</feature>
<feature type="sequence conflict" description="In Ref. 1; AAA78935." evidence="32" ref="1">
    <original>D</original>
    <variation>G</variation>
    <location>
        <position position="655"/>
    </location>
</feature>
<feature type="sequence conflict" description="In Ref. 1; AAA78935." evidence="32" ref="1">
    <original>AT</original>
    <variation>PK</variation>
    <location>
        <begin position="661"/>
        <end position="662"/>
    </location>
</feature>
<feature type="turn" evidence="44">
    <location>
        <begin position="171"/>
        <end position="173"/>
    </location>
</feature>
<feature type="turn" evidence="44">
    <location>
        <begin position="192"/>
        <end position="194"/>
    </location>
</feature>
<feature type="strand" evidence="44">
    <location>
        <begin position="195"/>
        <end position="199"/>
    </location>
</feature>
<feature type="helix" evidence="44">
    <location>
        <begin position="207"/>
        <end position="224"/>
    </location>
</feature>
<feature type="helix" evidence="44">
    <location>
        <begin position="238"/>
        <end position="246"/>
    </location>
</feature>
<feature type="helix" evidence="44">
    <location>
        <begin position="248"/>
        <end position="260"/>
    </location>
</feature>
<feature type="turn" evidence="44">
    <location>
        <begin position="261"/>
        <end position="263"/>
    </location>
</feature>
<feature type="helix" evidence="44">
    <location>
        <begin position="265"/>
        <end position="272"/>
    </location>
</feature>
<feature type="helix" evidence="44">
    <location>
        <begin position="284"/>
        <end position="287"/>
    </location>
</feature>
<feature type="helix" evidence="44">
    <location>
        <begin position="290"/>
        <end position="303"/>
    </location>
</feature>
<feature type="helix" evidence="44">
    <location>
        <begin position="307"/>
        <end position="313"/>
    </location>
</feature>
<feature type="helix" evidence="44">
    <location>
        <begin position="320"/>
        <end position="330"/>
    </location>
</feature>
<feature type="strand" evidence="46">
    <location>
        <begin position="472"/>
        <end position="474"/>
    </location>
</feature>
<feature type="helix" evidence="46">
    <location>
        <begin position="477"/>
        <end position="485"/>
    </location>
</feature>
<feature type="helix" evidence="46">
    <location>
        <begin position="487"/>
        <end position="490"/>
    </location>
</feature>
<feature type="helix" evidence="46">
    <location>
        <begin position="492"/>
        <end position="495"/>
    </location>
</feature>
<feature type="helix" evidence="46">
    <location>
        <begin position="505"/>
        <end position="514"/>
    </location>
</feature>
<feature type="helix" evidence="46">
    <location>
        <begin position="534"/>
        <end position="542"/>
    </location>
</feature>
<feature type="helix" evidence="45">
    <location>
        <begin position="674"/>
        <end position="680"/>
    </location>
</feature>
<protein>
    <recommendedName>
        <fullName>Metastasis-associated protein MTA1</fullName>
    </recommendedName>
</protein>
<sequence length="715" mass="80786">MAANMYRVGDYVYFENSSSNPYLIRRIEELNKTANGNVEAKVVCFYRRRDISSTLIALADKHATLSVCYKAGPGADNGEEGEIEEEMENPEMVDLPEKLKHQLRHRELFLSRQLESLPATHIRGKCSVTLLNETESLKSYLEREDFFFYSLVYDPQQKTLLADKGEIRVGNRYQADITDLLKEGEEDGRDQSRLETQVWEAHNPLTDKQIDQFLVVARSVGTFARALDCSSSVRQPSLHMSAAAASRDITLFHAMDTLHKNIYDISKAISALVPQGGPVLCRDEMEEWSASEANLFEEALEKYGKDFTDIQQDFLPWKSLTSIIEYYYMWKTTDRYVQQKRLKAAEAESKLKQVYIPNYNKPNPNQISVNNVKAGVVNGTGAPGQSPGAGRACESCYTTQSYQWYSWGPPNMQCRLCASCWTYWKKYGGLKMPTRLDGERPGPNRSNMSPHGLPARSSGSPKFAMKTRQAFYLHTTKLTRIARRLCREILRPWHAARHPYLPINSAAIKAECTARLPEASQSPLVLKQAVRKPLEAVLRYLETHPRPPKPDPVKSVSSVLSSLTPAKVAPVINNGSPTILGKRSYEQHNGVDGNMKKRLLMPSRGLANHGQARHMGPSRNLLLNGKSYPTKVRLIRGGSLPPVKRRRMNWIDAPDDVFYMATEETRKIRKLLSSSETKRAARRPYKPIALRQSQALPPRPPPPAPVNDEPIVIED</sequence>
<proteinExistence type="evidence at protein level"/>
<accession>Q13330</accession>
<accession>A5PLK4</accession>
<accession>Q86SW2</accession>
<accession>Q8NFI8</accession>
<accession>Q96GI8</accession>
<name>MTA1_HUMAN</name>
<comment type="function">
    <text evidence="1 12 13 14 15 17 19 21">Transcriptional coregulator which can act as both a transcriptional corepressor and coactivator (PubMed:16617102, PubMed:17671180, PubMed:17922032, PubMed:21965678, PubMed:24413532). Acts as a component of the histone deacetylase NuRD complex which participates in the remodeling of chromatin (PubMed:16428440, PubMed:28977666). In the NuRD complex, regulates transcription of its targets by modifying the acetylation status of the target chromatin and cofactor accessibility to the target DNA (PubMed:17671180). In conjunction with other components of NuRD, acts as a transcriptional corepressor of BRCA1, ESR1, TFF1 and CDKN1A (PubMed:17922032, PubMed:24413532). Acts as a transcriptional coactivator of BCAS3, and SUMO2, independent of the NuRD complex (PubMed:16617102, PubMed:17671180, PubMed:21965678). Stimulates the expression of WNT1 by inhibiting the expression of its transcriptional corepressor SIX3 (By similarity). Regulates p53-dependent and -independent DNA repair processes following genotoxic stress (PubMed:19837670). Regulates the stability and function of p53/TP53 by inhibiting its ubiquitination by COP1 and MDM2 thereby regulating the p53-dependent DNA repair (PubMed:19837670). Plays a role in the regulation of the circadian clock and is essential for the generation and maintenance of circadian rhythms under constant light and for normal entrainment of behavior to light-dark (LD) cycles (By similarity). Positively regulates the CLOCK-BMAL1 heterodimer mediated transcriptional activation of its own transcription and the transcription of CRY1 (By similarity). Regulates deacetylation of BMAL1 by regulating SIRT1 expression, resulting in derepressing CRY1-mediated transcription repression (By similarity). With TFCP2L1, promotes establishment and maintenance of pluripotency in embryonic stem cells (ESCs) and inhibits endoderm differentiation (By similarity).</text>
</comment>
<comment type="function">
    <molecule>Isoform Short</molecule>
    <text evidence="8">Binds to ESR1 and sequesters it in the cytoplasm and enhances its non-genomic responses.</text>
</comment>
<comment type="subunit">
    <text evidence="1 8 9 11 12 13 14 16 17 18 19 20 21 23 24 25 26 29">Component of the nucleosome remodeling and deacetylase (NuRD) repressor complex, composed of core proteins MTA1, MTA2, MTA3, RBBP4, RBBP7, HDAC1, HDAC2, MBD2, MBD3, and peripherally associated proteins CDK2AP1, CDK2AP2, GATAD2A, GATAD2B, CHD3, CHD4 and CHD5 (PubMed:16428440, PubMed:28977666, PubMed:33283408, PubMed:9885572). The exact stoichiometry of the NuRD complex is unknown, and some subunits such as MBD2 and MBD3, GATAD2A and GATAD2B, and CHD3, CHD4 and CHD5 define mutually exclusive NuRD complexes (PubMed:16428440, PubMed:28977666, PubMed:33283408). Interacts with RBBP4; the interaction is direct (PubMed:24920672). Interacts with BMAL1 (By similarity). Interacts with CLOCK (By similarity). Interacts with COP1 (PubMed:19805145). Interacts with CSNK1G2 in the cytoplasm (PubMed:15077195). Interacts with EP300 (PubMed:16617102). Interacts with HDAC2 (PubMed:17671180, PubMed:19805145, PubMed:21965678, PubMed:24970816). Interacts with IFI16 (PubMed:24413532). Interacts with ITGB3BP/CENPR (PubMed:15254226). Interacts with MBD3L2 (PubMed:15701600). Interacts with MDM2 (PubMed:19837670). Interacts with NACC2 (PubMed:22926524). Interacts with p53/TP53 (PubMed:19837670). Interacts with PIAS1 (PubMed:21965678). Interacts with PIAS3 (PubMed:21965678). Interacts with PIAS4 (PubMed:21965678). Interacts with PWWP2A (PubMed:30327463). Interacts with PWWP2B (By similarity). Interacts with SENP1 (PubMed:21965678). Interacts with SENP2 (PubMed:21965678). Interacts with SIX3; facilitates the binding of SIX3 to the core DNA motif of SIX3 promoter (PubMed:20682799). Interacts with SUMO1 (PubMed:21965678). Interacts with SUMO2 (PubMed:21965678). Interacts with TFCP2L1; which is indispensable for TFCP2L1-mediated self-renewal-promoting effect and endoderm-inhibiting action (By similarity). Interacts with TFAP2C (PubMed:24413532). Interacts with TPR (PubMed:24970816). Interacts with UBE2I/UBC9 (PubMed:21965678).</text>
</comment>
<comment type="interaction">
    <interactant intactId="EBI-714236">
        <id>Q13330</id>
    </interactant>
    <interactant intactId="EBI-625922">
        <id>Q8N726</id>
        <label>CDKN2A</label>
    </interactant>
    <organismsDiffer>false</organismsDiffer>
    <experiments>2</experiments>
</comment>
<comment type="interaction">
    <interactant intactId="EBI-714236">
        <id>Q13330</id>
    </interactant>
    <interactant intactId="EBI-3867333">
        <id>A8MQ03</id>
        <label>CYSRT1</label>
    </interactant>
    <organismsDiffer>false</organismsDiffer>
    <experiments>3</experiments>
</comment>
<comment type="interaction">
    <interactant intactId="EBI-714236">
        <id>Q13330</id>
    </interactant>
    <interactant intactId="EBI-744366">
        <id>Q96KQ7</id>
        <label>EHMT2</label>
    </interactant>
    <organismsDiffer>false</organismsDiffer>
    <experiments>9</experiments>
</comment>
<comment type="interaction">
    <interactant intactId="EBI-714236">
        <id>Q13330</id>
    </interactant>
    <interactant intactId="EBI-301834">
        <id>Q13547</id>
        <label>HDAC1</label>
    </interactant>
    <organismsDiffer>false</organismsDiffer>
    <experiments>16</experiments>
</comment>
<comment type="interaction">
    <interactant intactId="EBI-714236">
        <id>Q13330</id>
    </interactant>
    <interactant intactId="EBI-301821">
        <id>Q92769</id>
        <label>HDAC2</label>
    </interactant>
    <organismsDiffer>false</organismsDiffer>
    <experiments>7</experiments>
</comment>
<comment type="interaction">
    <interactant intactId="EBI-714236">
        <id>Q13330</id>
    </interactant>
    <interactant intactId="EBI-447269">
        <id>Q16665</id>
        <label>HIF1A</label>
    </interactant>
    <organismsDiffer>false</organismsDiffer>
    <experiments>6</experiments>
</comment>
<comment type="interaction">
    <interactant intactId="EBI-714236">
        <id>Q13330</id>
    </interactant>
    <interactant intactId="EBI-745305">
        <id>Q13422</id>
        <label>IKZF1</label>
    </interactant>
    <organismsDiffer>false</organismsDiffer>
    <experiments>5</experiments>
</comment>
<comment type="interaction">
    <interactant intactId="EBI-714236">
        <id>Q13330</id>
    </interactant>
    <interactant intactId="EBI-852823">
        <id>P05412</id>
        <label>JUN</label>
    </interactant>
    <organismsDiffer>false</organismsDiffer>
    <experiments>4</experiments>
</comment>
<comment type="interaction">
    <interactant intactId="EBI-714236">
        <id>Q13330</id>
    </interactant>
    <interactant intactId="EBI-742808">
        <id>Q5VWX1</id>
        <label>KHDRBS2</label>
    </interactant>
    <organismsDiffer>false</organismsDiffer>
    <experiments>3</experiments>
</comment>
<comment type="interaction">
    <interactant intactId="EBI-714236">
        <id>Q13330</id>
    </interactant>
    <interactant intactId="EBI-358297">
        <id>O00505</id>
        <label>KPNA3</label>
    </interactant>
    <organismsDiffer>false</organismsDiffer>
    <experiments>3</experiments>
</comment>
<comment type="interaction">
    <interactant intactId="EBI-714236">
        <id>Q13330</id>
    </interactant>
    <interactant intactId="EBI-396343">
        <id>O00629</id>
        <label>KPNA4</label>
    </interactant>
    <organismsDiffer>false</organismsDiffer>
    <experiments>4</experiments>
</comment>
<comment type="interaction">
    <interactant intactId="EBI-714236">
        <id>Q13330</id>
    </interactant>
    <interactant intactId="EBI-948001">
        <id>Q15323</id>
        <label>KRT31</label>
    </interactant>
    <organismsDiffer>false</organismsDiffer>
    <experiments>3</experiments>
</comment>
<comment type="interaction">
    <interactant intactId="EBI-714236">
        <id>Q13330</id>
    </interactant>
    <interactant intactId="EBI-10171697">
        <id>Q6A162</id>
        <label>KRT40</label>
    </interactant>
    <organismsDiffer>false</organismsDiffer>
    <experiments>4</experiments>
</comment>
<comment type="interaction">
    <interactant intactId="EBI-714236">
        <id>Q13330</id>
    </interactant>
    <interactant intactId="EBI-10171774">
        <id>P60410</id>
        <label>KRTAP10-8</label>
    </interactant>
    <organismsDiffer>false</organismsDiffer>
    <experiments>3</experiments>
</comment>
<comment type="interaction">
    <interactant intactId="EBI-714236">
        <id>Q13330</id>
    </interactant>
    <interactant intactId="EBI-741037">
        <id>Q9BRK4</id>
        <label>LZTS2</label>
    </interactant>
    <organismsDiffer>false</organismsDiffer>
    <experiments>3</experiments>
</comment>
<comment type="interaction">
    <interactant intactId="EBI-714236">
        <id>Q13330</id>
    </interactant>
    <interactant intactId="EBI-10178634">
        <id>P43364-2</id>
        <label>MAGEA11</label>
    </interactant>
    <organismsDiffer>false</organismsDiffer>
    <experiments>3</experiments>
</comment>
<comment type="interaction">
    <interactant intactId="EBI-714236">
        <id>Q13330</id>
    </interactant>
    <interactant intactId="EBI-945833">
        <id>Q7Z3S9</id>
        <label>NOTCH2NLA</label>
    </interactant>
    <organismsDiffer>false</organismsDiffer>
    <experiments>3</experiments>
</comment>
<comment type="interaction">
    <interactant intactId="EBI-714236">
        <id>Q13330</id>
    </interactant>
    <interactant intactId="EBI-22310682">
        <id>P0DPK4</id>
        <label>NOTCH2NLC</label>
    </interactant>
    <organismsDiffer>false</organismsDiffer>
    <experiments>3</experiments>
</comment>
<comment type="interaction">
    <interactant intactId="EBI-714236">
        <id>Q13330</id>
    </interactant>
    <interactant intactId="EBI-79165">
        <id>Q9NRD5</id>
        <label>PICK1</label>
    </interactant>
    <organismsDiffer>false</organismsDiffer>
    <experiments>3</experiments>
</comment>
<comment type="interaction">
    <interactant intactId="EBI-714236">
        <id>Q13330</id>
    </interactant>
    <interactant intactId="EBI-949255">
        <id>Q58EX7</id>
        <label>PLEKHG4</label>
    </interactant>
    <organismsDiffer>false</organismsDiffer>
    <experiments>3</experiments>
</comment>
<comment type="interaction">
    <interactant intactId="EBI-714236">
        <id>Q13330</id>
    </interactant>
    <interactant intactId="EBI-620823">
        <id>Q09028</id>
        <label>RBBP4</label>
    </interactant>
    <organismsDiffer>false</organismsDiffer>
    <experiments>14</experiments>
</comment>
<comment type="interaction">
    <interactant intactId="EBI-714236">
        <id>Q13330</id>
    </interactant>
    <interactant intactId="EBI-711613">
        <id>P21673</id>
        <label>SAT1</label>
    </interactant>
    <organismsDiffer>false</organismsDiffer>
    <experiments>3</experiments>
</comment>
<comment type="interaction">
    <interactant intactId="EBI-714236">
        <id>Q13330</id>
    </interactant>
    <interactant intactId="EBI-10173690">
        <id>Q6FGM0</id>
        <label>SH3GL1</label>
    </interactant>
    <organismsDiffer>false</organismsDiffer>
    <experiments>3</experiments>
</comment>
<comment type="interaction">
    <interactant intactId="EBI-714236">
        <id>Q13330</id>
    </interactant>
    <interactant intactId="EBI-697911">
        <id>Q99961</id>
        <label>SH3GL1</label>
    </interactant>
    <organismsDiffer>false</organismsDiffer>
    <experiments>3</experiments>
</comment>
<comment type="interaction">
    <interactant intactId="EBI-714236">
        <id>Q13330</id>
    </interactant>
    <interactant intactId="EBI-717614">
        <id>O60315</id>
        <label>ZEB2</label>
    </interactant>
    <organismsDiffer>false</organismsDiffer>
    <experiments>12</experiments>
</comment>
<comment type="subcellular location">
    <subcellularLocation>
        <location evidence="21 24 26">Nucleus</location>
    </subcellularLocation>
</comment>
<comment type="subcellular location">
    <molecule>Isoform Short</molecule>
    <subcellularLocation>
        <location evidence="7 8">Cytoplasm</location>
    </subcellularLocation>
</comment>
<comment type="subcellular location">
    <molecule>Isoform Long</molecule>
    <subcellularLocation>
        <location evidence="19">Nucleus</location>
    </subcellularLocation>
    <subcellularLocation>
        <location evidence="23">Nucleus envelope</location>
    </subcellularLocation>
    <subcellularLocation>
        <location evidence="13 23">Cytoplasm</location>
    </subcellularLocation>
    <subcellularLocation>
        <location evidence="23">Cytoplasm</location>
        <location evidence="23">Cytoskeleton</location>
    </subcellularLocation>
    <text evidence="23">Associated with microtubules (PubMed:24970816). Localization at the nuclear envelope is TPR-dependent (PubMed:24970816).</text>
</comment>
<comment type="alternative products">
    <event type="alternative splicing"/>
    <isoform>
        <id>Q13330-1</id>
        <name>Long</name>
        <sequence type="displayed"/>
    </isoform>
    <isoform>
        <id>Q13330-2</id>
        <name>Short</name>
        <name>MTA1S</name>
        <sequence type="described" ref="VSP_001601 VSP_001602"/>
    </isoform>
    <isoform>
        <id>Q13330-3</id>
        <name>3</name>
        <sequence type="described" ref="VSP_042207"/>
    </isoform>
</comment>
<comment type="tissue specificity">
    <text evidence="13 23">Widely expressed. High expression in brain, liver, kidney, and cardiac muscle, ovaries, adrenal glands and virgin mammary glands. Higher in tumors than in adjacent normal tissue from the same individual. Up-regulated in a wide variety of cancers including breast, liver, ovarian, and colorectal cancer and its expression levels are closely correlated with tumor aggressiveness and metastasis.</text>
</comment>
<comment type="developmental stage">
    <text>Highly expressed in metastatic cells.</text>
</comment>
<comment type="domain">
    <text>Isoform Short contains a Leu-Arg-Ile-Leu-Leu motif (ER binding motif).</text>
</comment>
<comment type="PTM">
    <text evidence="8">Phosphorylation by CSNK1G2/CK1 triggered by estrogen enhances corepression of estrogen receptor (ER).</text>
</comment>
<comment type="PTM">
    <text evidence="13 14 16">Acetylation is essential for its transcriptional coactivator activity.</text>
</comment>
<comment type="PTM">
    <text evidence="19">Sumoylation positively regulates its transcriptional corepressor activity but does not affect the protein stability. Sumoylated preferentially by SUMO2 or SUMO3 than SUMO1. Sumoylation is enhanced by PIAS1/3/4 and preferentially sumoylated by SUMO2 in the presence of PIAS1/3/4. Desumoylated by SENP1.</text>
</comment>
<comment type="PTM">
    <text evidence="16">Ubiquitinated by COP1, which leads to proteasomal degradation.</text>
</comment>
<comment type="disease">
    <text evidence="21">Involved in the epigenetic regulation of ESR1 expression in breast cancer in a TFAP2C, IFI16 and HDAC4/5/6-dependent manner.</text>
</comment>
<comment type="similarity">
    <text evidence="32">Belongs to the metastasis-associated protein family.</text>
</comment>
<comment type="online information" name="Atlas of Genetics and Cytogenetics in Oncology and Haematology">
    <link uri="https://atlasgeneticsoncology.org/gene/41443/mta1"/>
</comment>
<reference key="1">
    <citation type="journal article" date="1994" name="J. Biol. Chem.">
        <title>A novel candidate metastasis-associated gene, mta1, differentially expressed in highly metastatic mammary adenocarcinoma cell lines. cDNA cloning, expression, and protein analyses.</title>
        <authorList>
            <person name="Toh Y."/>
            <person name="Pencil S.D."/>
            <person name="Nicolson G.L."/>
        </authorList>
    </citation>
    <scope>NUCLEOTIDE SEQUENCE [MRNA] (ISOFORM LONG)</scope>
    <scope>VARIANT THR-612</scope>
</reference>
<reference key="2">
    <citation type="journal article" date="1995" name="Gene">
        <title>Analysis of the complete sequence of the novel metastasis-associated candidate gene, mta1, differentially expressed in mammary adenocarcinoma and breast cancer cell lines.</title>
        <authorList>
            <person name="Toh Y."/>
            <person name="Pencil S.D."/>
            <person name="Nicolson G.L."/>
        </authorList>
    </citation>
    <scope>NUCLEOTIDE SEQUENCE [MRNA] (ISOFORM LONG)</scope>
    <scope>VARIANT THR-612</scope>
</reference>
<reference key="3">
    <citation type="journal article" date="2002" name="Nature">
        <title>A naturally occurring MTA1 variant sequesters oestrogen receptor-alpha in the cytoplasm.</title>
        <authorList>
            <person name="Kumar R."/>
            <person name="Wang R.-A."/>
            <person name="Mazumdar A."/>
            <person name="Talukder A.H."/>
            <person name="Mandal M."/>
            <person name="Yang Z."/>
            <person name="Bagheri-Yarmand R."/>
            <person name="Sahin A."/>
            <person name="Hortobagyi G."/>
            <person name="Adam L."/>
            <person name="Barnes C.J."/>
            <person name="Vadlamudi R.K."/>
        </authorList>
    </citation>
    <scope>NUCLEOTIDE SEQUENCE [MRNA] (ISOFORM SHORT)</scope>
    <scope>SUBCELLULAR LOCATION (ISOFORM SHORT)</scope>
    <source>
        <tissue>Mammary gland</tissue>
    </source>
</reference>
<reference key="4">
    <citation type="journal article" date="2003" name="Nature">
        <title>The DNA sequence and analysis of human chromosome 14.</title>
        <authorList>
            <person name="Heilig R."/>
            <person name="Eckenberg R."/>
            <person name="Petit J.-L."/>
            <person name="Fonknechten N."/>
            <person name="Da Silva C."/>
            <person name="Cattolico L."/>
            <person name="Levy M."/>
            <person name="Barbe V."/>
            <person name="De Berardinis V."/>
            <person name="Ureta-Vidal A."/>
            <person name="Pelletier E."/>
            <person name="Vico V."/>
            <person name="Anthouard V."/>
            <person name="Rowen L."/>
            <person name="Madan A."/>
            <person name="Qin S."/>
            <person name="Sun H."/>
            <person name="Du H."/>
            <person name="Pepin K."/>
            <person name="Artiguenave F."/>
            <person name="Robert C."/>
            <person name="Cruaud C."/>
            <person name="Bruels T."/>
            <person name="Jaillon O."/>
            <person name="Friedlander L."/>
            <person name="Samson G."/>
            <person name="Brottier P."/>
            <person name="Cure S."/>
            <person name="Segurens B."/>
            <person name="Aniere F."/>
            <person name="Samain S."/>
            <person name="Crespeau H."/>
            <person name="Abbasi N."/>
            <person name="Aiach N."/>
            <person name="Boscus D."/>
            <person name="Dickhoff R."/>
            <person name="Dors M."/>
            <person name="Dubois I."/>
            <person name="Friedman C."/>
            <person name="Gouyvenoux M."/>
            <person name="James R."/>
            <person name="Madan A."/>
            <person name="Mairey-Estrada B."/>
            <person name="Mangenot S."/>
            <person name="Martins N."/>
            <person name="Menard M."/>
            <person name="Oztas S."/>
            <person name="Ratcliffe A."/>
            <person name="Shaffer T."/>
            <person name="Trask B."/>
            <person name="Vacherie B."/>
            <person name="Bellemere C."/>
            <person name="Belser C."/>
            <person name="Besnard-Gonnet M."/>
            <person name="Bartol-Mavel D."/>
            <person name="Boutard M."/>
            <person name="Briez-Silla S."/>
            <person name="Combette S."/>
            <person name="Dufosse-Laurent V."/>
            <person name="Ferron C."/>
            <person name="Lechaplais C."/>
            <person name="Louesse C."/>
            <person name="Muselet D."/>
            <person name="Magdelenat G."/>
            <person name="Pateau E."/>
            <person name="Petit E."/>
            <person name="Sirvain-Trukniewicz P."/>
            <person name="Trybou A."/>
            <person name="Vega-Czarny N."/>
            <person name="Bataille E."/>
            <person name="Bluet E."/>
            <person name="Bordelais I."/>
            <person name="Dubois M."/>
            <person name="Dumont C."/>
            <person name="Guerin T."/>
            <person name="Haffray S."/>
            <person name="Hammadi R."/>
            <person name="Muanga J."/>
            <person name="Pellouin V."/>
            <person name="Robert D."/>
            <person name="Wunderle E."/>
            <person name="Gauguet G."/>
            <person name="Roy A."/>
            <person name="Sainte-Marthe L."/>
            <person name="Verdier J."/>
            <person name="Verdier-Discala C."/>
            <person name="Hillier L.W."/>
            <person name="Fulton L."/>
            <person name="McPherson J."/>
            <person name="Matsuda F."/>
            <person name="Wilson R."/>
            <person name="Scarpelli C."/>
            <person name="Gyapay G."/>
            <person name="Wincker P."/>
            <person name="Saurin W."/>
            <person name="Quetier F."/>
            <person name="Waterston R."/>
            <person name="Hood L."/>
            <person name="Weissenbach J."/>
        </authorList>
    </citation>
    <scope>NUCLEOTIDE SEQUENCE [LARGE SCALE GENOMIC DNA]</scope>
</reference>
<reference key="5">
    <citation type="journal article" date="2004" name="Genome Res.">
        <title>The status, quality, and expansion of the NIH full-length cDNA project: the Mammalian Gene Collection (MGC).</title>
        <authorList>
            <consortium name="The MGC Project Team"/>
        </authorList>
    </citation>
    <scope>NUCLEOTIDE SEQUENCE [LARGE SCALE MRNA] (ISOFORM LONG)</scope>
    <scope>VARIANT THR-612</scope>
    <source>
        <tissue>Brain</tissue>
    </source>
</reference>
<reference key="6">
    <citation type="submission" date="2004-07" db="EMBL/GenBank/DDBJ databases">
        <title>Full-length cDNA libraries and normalization.</title>
        <authorList>
            <person name="Li W.B."/>
            <person name="Gruber C."/>
            <person name="Jessee J."/>
            <person name="Polayes D."/>
        </authorList>
    </citation>
    <scope>NUCLEOTIDE SEQUENCE [LARGE SCALE MRNA] OF 10-299 (ISOFORM 3)</scope>
    <source>
        <tissue>Cervix carcinoma</tissue>
    </source>
</reference>
<reference key="7">
    <citation type="journal article" date="1998" name="Mol. Cell">
        <title>NURD, a novel complex with both ATP-dependent chromatin-remodeling and histone deacetylase activities.</title>
        <authorList>
            <person name="Xue Y."/>
            <person name="Wong J."/>
            <person name="Moreno G.T."/>
            <person name="Young M.K."/>
            <person name="Cote J."/>
            <person name="Wang W."/>
        </authorList>
    </citation>
    <scope>IDENTIFICATION IN NURD COMPLEX</scope>
</reference>
<reference key="8">
    <citation type="journal article" date="2004" name="Mol. Cell. Biol.">
        <title>Metastasis-associated protein 1 interacts with NRIF3, an estrogen-inducible nuclear receptor coregulator.</title>
        <authorList>
            <person name="Talukder A.H."/>
            <person name="Gururaj A."/>
            <person name="Mishra S.K."/>
            <person name="Vadlamudi R.K."/>
            <person name="Kumar R."/>
        </authorList>
    </citation>
    <scope>INTERACTION WITH ITGB3BP</scope>
</reference>
<reference key="9">
    <citation type="journal article" date="2004" name="Oncogene">
        <title>Metastatic tumor antigen 1 short form (MTA1s) associates with casein kinase I-gamma2, an estrogen-responsive kinase.</title>
        <authorList>
            <person name="Mishra S.K."/>
            <person name="Yang Z."/>
            <person name="Mazumdar A."/>
            <person name="Talukder A.H."/>
            <person name="Larose L."/>
            <person name="Kumar R."/>
        </authorList>
    </citation>
    <scope>FUNCTION (ISOFORM SHORT)</scope>
    <scope>PHOSPHORYLATION BY CSNK1G2/CK1</scope>
    <scope>INTERACTION WITH CSNK1G2</scope>
    <scope>SUBCELLULAR LOCATION (ISOFORM SHORT)</scope>
</reference>
<reference key="10">
    <citation type="journal article" date="2005" name="J. Biol. Chem.">
        <title>MBD3L2 interacts with MBD3 and components of the NuRD complex and can oppose MBD2-MeCP1-mediated methylation silencing.</title>
        <authorList>
            <person name="Jin S.-G."/>
            <person name="Jiang C.-L."/>
            <person name="Rauch T."/>
            <person name="Li H."/>
            <person name="Pfeifer G.P."/>
        </authorList>
    </citation>
    <scope>INTERACTION WITH MBD3L2</scope>
</reference>
<reference key="11">
    <citation type="journal article" date="2006" name="Cell">
        <title>Global, in vivo, and site-specific phosphorylation dynamics in signaling networks.</title>
        <authorList>
            <person name="Olsen J.V."/>
            <person name="Blagoev B."/>
            <person name="Gnad F."/>
            <person name="Macek B."/>
            <person name="Kumar C."/>
            <person name="Mortensen P."/>
            <person name="Mann M."/>
        </authorList>
    </citation>
    <scope>IDENTIFICATION BY MASS SPECTROMETRY [LARGE SCALE ANALYSIS]</scope>
    <source>
        <tissue>Cervix carcinoma</tissue>
    </source>
</reference>
<reference key="12">
    <citation type="journal article" date="2006" name="Nat. Biotechnol.">
        <title>A probability-based approach for high-throughput protein phosphorylation analysis and site localization.</title>
        <authorList>
            <person name="Beausoleil S.A."/>
            <person name="Villen J."/>
            <person name="Gerber S.A."/>
            <person name="Rush J."/>
            <person name="Gygi S.P."/>
        </authorList>
    </citation>
    <scope>PHOSPHORYLATION [LARGE SCALE ANALYSIS] AT SER-386 AND THR-564</scope>
    <scope>IDENTIFICATION BY MASS SPECTROMETRY [LARGE SCALE ANALYSIS]</scope>
    <source>
        <tissue>Cervix carcinoma</tissue>
    </source>
</reference>
<reference key="13">
    <citation type="journal article" date="2006" name="Proc. Natl. Acad. Sci. U.S.A.">
        <title>MTA1, a transcriptional activator of breast cancer amplified sequence 3.</title>
        <authorList>
            <person name="Gururaj A.E."/>
            <person name="Singh R.R."/>
            <person name="Rayala S.K."/>
            <person name="Holm C."/>
            <person name="den Hollander P."/>
            <person name="Zhang H."/>
            <person name="Balasenthil S."/>
            <person name="Talukder A.H."/>
            <person name="Landberg G."/>
            <person name="Kumar R."/>
        </authorList>
    </citation>
    <scope>FUNCTION</scope>
    <scope>INTERACTION WITH EP300</scope>
    <scope>SUBCELLULAR LOCATION (ISOFORM LONG)</scope>
    <scope>TISSUE SPECIFICITY</scope>
    <scope>ACETYLATION AT LYS-626</scope>
    <scope>MUTAGENESIS OF LYS-626</scope>
</reference>
<reference key="14">
    <citation type="journal article" date="2013" name="Proc. Natl. Acad. Sci. U.S.A.">
        <authorList>
            <person name="Gururaj A.E."/>
            <person name="Singh R.R."/>
            <person name="Rayala S.K."/>
            <person name="Holm C."/>
            <person name="den Hollander P."/>
            <person name="Zhang H."/>
            <person name="Balasenthil S."/>
            <person name="Talukder A.H."/>
            <person name="Landberg G."/>
            <person name="Kumar R."/>
        </authorList>
    </citation>
    <scope>ERRATUM OF PUBMED:16617102</scope>
</reference>
<reference key="15">
    <citation type="journal article" date="2006" name="Mol. Cell. Biol.">
        <title>MBD2/NuRD and MBD3/NuRD, two distinct complexes with different biochemical and functional properties.</title>
        <authorList>
            <person name="Le Guezennec X."/>
            <person name="Vermeulen M."/>
            <person name="Brinkman A.B."/>
            <person name="Hoeijmakers W.A."/>
            <person name="Cohen A."/>
            <person name="Lasonder E."/>
            <person name="Stunnenberg H.G."/>
        </authorList>
    </citation>
    <scope>FUNCTION</scope>
    <scope>IDENTIFICATION IN THE NURD COMPLEX</scope>
    <scope>IDENTIFICATION BY MASS SPECTROMETRY</scope>
</reference>
<reference key="16">
    <citation type="journal article" date="2007" name="Cancer Res.">
        <title>Identification of Pax5 as a target of MTA1 in B-cell lymphomas.</title>
        <authorList>
            <person name="Balasenthil S."/>
            <person name="Gururaj A.E."/>
            <person name="Talukder A.H."/>
            <person name="Bagheri-Yarmand R."/>
            <person name="Arrington T."/>
            <person name="Haas B.J."/>
            <person name="Braisted J.C."/>
            <person name="Kim I."/>
            <person name="Lee N.H."/>
            <person name="Kumar R."/>
        </authorList>
    </citation>
    <scope>FUNCTION</scope>
    <scope>INTERACTION WITH HDAC2</scope>
    <scope>ACETYLATION AT LYS-626</scope>
    <scope>MUTAGENESIS OF LYS-626</scope>
</reference>
<reference key="17">
    <citation type="journal article" date="2015" name="Cancer Res.">
        <authorList>
            <person name="Balasenthil S."/>
            <person name="Gururaj A.E."/>
            <person name="Talukder A.H."/>
            <person name="Bagheri-Yarmand R."/>
            <person name="Arrington T."/>
            <person name="Haas B.J."/>
            <person name="Braisted J.C."/>
            <person name="Kim I."/>
            <person name="Lee N.H."/>
            <person name="Kumar R."/>
        </authorList>
    </citation>
    <scope>ERRATUM OF PUBMED:17671180</scope>
</reference>
<reference key="18">
    <citation type="journal article" date="2008" name="J. Proteome Res.">
        <title>Combining protein-based IMAC, peptide-based IMAC, and MudPIT for efficient phosphoproteomic analysis.</title>
        <authorList>
            <person name="Cantin G.T."/>
            <person name="Yi W."/>
            <person name="Lu B."/>
            <person name="Park S.K."/>
            <person name="Xu T."/>
            <person name="Lee J.-D."/>
            <person name="Yates J.R. III"/>
        </authorList>
    </citation>
    <scope>IDENTIFICATION BY MASS SPECTROMETRY [LARGE SCALE ANALYSIS]</scope>
    <source>
        <tissue>Cervix carcinoma</tissue>
    </source>
</reference>
<reference key="19">
    <citation type="journal article" date="2008" name="Mol. Cell">
        <title>Kinase-selective enrichment enables quantitative phosphoproteomics of the kinome across the cell cycle.</title>
        <authorList>
            <person name="Daub H."/>
            <person name="Olsen J.V."/>
            <person name="Bairlein M."/>
            <person name="Gnad F."/>
            <person name="Oppermann F.S."/>
            <person name="Korner R."/>
            <person name="Greff Z."/>
            <person name="Keri G."/>
            <person name="Stemmann O."/>
            <person name="Mann M."/>
        </authorList>
    </citation>
    <scope>PHOSPHORYLATION [LARGE SCALE ANALYSIS] AT SER-386</scope>
    <scope>IDENTIFICATION BY MASS SPECTROMETRY [LARGE SCALE ANALYSIS]</scope>
    <source>
        <tissue>Cervix carcinoma</tissue>
    </source>
</reference>
<reference key="20">
    <citation type="journal article" date="2008" name="Oncogene">
        <title>MTA1-mediated transcriptional repression of BRCA1 tumor suppressor gene.</title>
        <authorList>
            <person name="Molli P.R."/>
            <person name="Singh R.R."/>
            <person name="Lee S.W."/>
            <person name="Kumar R."/>
        </authorList>
    </citation>
    <scope>FUNCTION</scope>
</reference>
<reference key="21">
    <citation type="journal article" date="2008" name="Proc. Natl. Acad. Sci. U.S.A.">
        <title>A quantitative atlas of mitotic phosphorylation.</title>
        <authorList>
            <person name="Dephoure N."/>
            <person name="Zhou C."/>
            <person name="Villen J."/>
            <person name="Beausoleil S.A."/>
            <person name="Bakalarski C.E."/>
            <person name="Elledge S.J."/>
            <person name="Gygi S.P."/>
        </authorList>
    </citation>
    <scope>PHOSPHORYLATION [LARGE SCALE ANALYSIS] AT SER-386; SER-449; SER-522; THR-564 AND SER-576</scope>
    <scope>IDENTIFICATION BY MASS SPECTROMETRY [LARGE SCALE ANALYSIS]</scope>
    <source>
        <tissue>Cervix carcinoma</tissue>
    </source>
</reference>
<reference key="22">
    <citation type="journal article" date="2009" name="Anal. Chem.">
        <title>Lys-N and trypsin cover complementary parts of the phosphoproteome in a refined SCX-based approach.</title>
        <authorList>
            <person name="Gauci S."/>
            <person name="Helbig A.O."/>
            <person name="Slijper M."/>
            <person name="Krijgsveld J."/>
            <person name="Heck A.J."/>
            <person name="Mohammed S."/>
        </authorList>
    </citation>
    <scope>IDENTIFICATION BY MASS SPECTROMETRY [LARGE SCALE ANALYSIS]</scope>
</reference>
<reference key="23">
    <citation type="journal article" date="2009" name="J. Biol. Chem.">
        <title>MTA1 coregulator regulates p53 stability and function.</title>
        <authorList>
            <person name="Li D.Q."/>
            <person name="Divijendra Natha Reddy S."/>
            <person name="Pakala S.B."/>
            <person name="Wu X."/>
            <person name="Zhang Y."/>
            <person name="Rayala S.K."/>
            <person name="Kumar R."/>
        </authorList>
    </citation>
    <scope>FUNCTION</scope>
    <scope>INTERACTION WITH MDM2 AND TP53</scope>
</reference>
<reference key="24">
    <citation type="journal article" date="2009" name="Proc. Natl. Acad. Sci. U.S.A.">
        <title>E3 ubiquitin ligase COP1 regulates the stability and functions of MTA1.</title>
        <authorList>
            <person name="Li D.Q."/>
            <person name="Ohshiro K."/>
            <person name="Reddy S.D."/>
            <person name="Pakala S.B."/>
            <person name="Lee M.H."/>
            <person name="Zhang Y."/>
            <person name="Rayala S.K."/>
            <person name="Kumar R."/>
        </authorList>
    </citation>
    <scope>UBIQUITINATION AT LYS-182 AND LYS-626</scope>
    <scope>ACETYLATION AT LYS-626</scope>
    <scope>MUTAGENESIS OF LYS-182 AND LYS-626</scope>
    <scope>INTERACTION WITH COP1 AND HDAC2</scope>
</reference>
<reference key="25">
    <citation type="journal article" date="2009" name="Sci. Signal.">
        <title>Quantitative phosphoproteomic analysis of T cell receptor signaling reveals system-wide modulation of protein-protein interactions.</title>
        <authorList>
            <person name="Mayya V."/>
            <person name="Lundgren D.H."/>
            <person name="Hwang S.-I."/>
            <person name="Rezaul K."/>
            <person name="Wu L."/>
            <person name="Eng J.K."/>
            <person name="Rodionov V."/>
            <person name="Han D.K."/>
        </authorList>
    </citation>
    <scope>PHOSPHORYLATION [LARGE SCALE ANALYSIS] AT SER-386; SER-522; THR-564; SER-576 AND THR-578</scope>
    <scope>IDENTIFICATION BY MASS SPECTROMETRY [LARGE SCALE ANALYSIS]</scope>
    <source>
        <tissue>Leukemic T-cell</tissue>
    </source>
</reference>
<reference key="26">
    <citation type="journal article" date="2010" name="Cancer Res.">
        <title>Metastasis-associated protein 1 and its short form variant stimulates Wnt1 transcription through promoting its derepression from Six3 corepressor.</title>
        <authorList>
            <person name="Kumar R."/>
            <person name="Balasenthil S."/>
            <person name="Manavathi B."/>
            <person name="Rayala S.K."/>
            <person name="Pakala S.B."/>
        </authorList>
    </citation>
    <scope>INTERACTION WITH SIX3</scope>
</reference>
<reference key="27">
    <citation type="journal article" date="2010" name="Sci. Signal.">
        <title>Quantitative phosphoproteomics reveals widespread full phosphorylation site occupancy during mitosis.</title>
        <authorList>
            <person name="Olsen J.V."/>
            <person name="Vermeulen M."/>
            <person name="Santamaria A."/>
            <person name="Kumar C."/>
            <person name="Miller M.L."/>
            <person name="Jensen L.J."/>
            <person name="Gnad F."/>
            <person name="Cox J."/>
            <person name="Jensen T.S."/>
            <person name="Nigg E.A."/>
            <person name="Brunak S."/>
            <person name="Mann M."/>
        </authorList>
    </citation>
    <scope>PHOSPHORYLATION [LARGE SCALE ANALYSIS] AT SER-386; SER-446; SER-449; SER-522; SER-576 AND THR-578</scope>
    <scope>IDENTIFICATION BY MASS SPECTROMETRY [LARGE SCALE ANALYSIS]</scope>
    <source>
        <tissue>Cervix carcinoma</tissue>
    </source>
</reference>
<reference key="28">
    <citation type="journal article" date="2011" name="BMC Syst. Biol.">
        <title>Initial characterization of the human central proteome.</title>
        <authorList>
            <person name="Burkard T.R."/>
            <person name="Planyavsky M."/>
            <person name="Kaupe I."/>
            <person name="Breitwieser F.P."/>
            <person name="Buerckstuemmer T."/>
            <person name="Bennett K.L."/>
            <person name="Superti-Furga G."/>
            <person name="Colinge J."/>
        </authorList>
    </citation>
    <scope>IDENTIFICATION BY MASS SPECTROMETRY [LARGE SCALE ANALYSIS]</scope>
</reference>
<reference key="29">
    <citation type="journal article" date="2011" name="J. Biol. Chem.">
        <title>SUMOylation and SUMO-interacting motif (SIM) of metastasis tumor antigen 1 (MTA1) synergistically regulate its transcriptional repressor function.</title>
        <authorList>
            <person name="Cong L."/>
            <person name="Pakala S.B."/>
            <person name="Ohshiro K."/>
            <person name="Li D.Q."/>
            <person name="Kumar R."/>
        </authorList>
    </citation>
    <scope>FUNCTION</scope>
    <scope>SUMOYLATION AT LYS-509</scope>
    <scope>SUBCELLULAR LOCATION (ISOFORM LONG)</scope>
    <scope>INTERACTION WITH HDAC2; UBE2I; PIAS1; PIAS3; PIAS4; SUMO1; SUMO2; SENP1 AND SENP2</scope>
    <scope>SUMO INTERACTION MOTIF</scope>
    <scope>MUTAGENESIS OF LYS-509 AND 711-ILE--ILE-713</scope>
</reference>
<reference key="30">
    <citation type="journal article" date="2011" name="Sci. Signal.">
        <title>System-wide temporal characterization of the proteome and phosphoproteome of human embryonic stem cell differentiation.</title>
        <authorList>
            <person name="Rigbolt K.T."/>
            <person name="Prokhorova T.A."/>
            <person name="Akimov V."/>
            <person name="Henningsen J."/>
            <person name="Johansen P.T."/>
            <person name="Kratchmarova I."/>
            <person name="Kassem M."/>
            <person name="Mann M."/>
            <person name="Olsen J.V."/>
            <person name="Blagoev B."/>
        </authorList>
    </citation>
    <scope>PHOSPHORYLATION [LARGE SCALE ANALYSIS] AT SER-386; SER-446; SER-449; SER-522; SER-576; THR-578 AND SER-639</scope>
    <scope>IDENTIFICATION BY MASS SPECTROMETRY [LARGE SCALE ANALYSIS]</scope>
</reference>
<reference key="31">
    <citation type="journal article" date="2012" name="Cancer Res.">
        <title>Metastasis-associated protein 1/nucleosome remodeling and histone deacetylase complex in cancer.</title>
        <authorList>
            <person name="Li D.Q."/>
            <person name="Pakala S.B."/>
            <person name="Nair S.S."/>
            <person name="Eswaran J."/>
            <person name="Kumar R."/>
        </authorList>
    </citation>
    <scope>REVIEW</scope>
</reference>
<reference key="32">
    <citation type="journal article" date="2013" name="J. Proteome Res.">
        <title>Toward a comprehensive characterization of a human cancer cell phosphoproteome.</title>
        <authorList>
            <person name="Zhou H."/>
            <person name="Di Palma S."/>
            <person name="Preisinger C."/>
            <person name="Peng M."/>
            <person name="Polat A.N."/>
            <person name="Heck A.J."/>
            <person name="Mohammed S."/>
        </authorList>
    </citation>
    <scope>PHOSPHORYLATION [LARGE SCALE ANALYSIS] AT SER-386; SER-449; SER-522; THR-564 AND SER-576</scope>
    <scope>IDENTIFICATION BY MASS SPECTROMETRY [LARGE SCALE ANALYSIS]</scope>
    <source>
        <tissue>Cervix carcinoma</tissue>
        <tissue>Erythroleukemia</tissue>
    </source>
</reference>
<reference key="33">
    <citation type="journal article" date="2013" name="Oncogene">
        <title>RBB, a novel transcription repressor, represses the transcription of HDM2 oncogene.</title>
        <authorList>
            <person name="Xuan C."/>
            <person name="Wang Q."/>
            <person name="Han X."/>
            <person name="Duan Y."/>
            <person name="Li L."/>
            <person name="Shi L."/>
            <person name="Wang Y."/>
            <person name="Shan L."/>
            <person name="Yao Z."/>
            <person name="Shang Y."/>
        </authorList>
    </citation>
    <scope>INTERACTION WITH NACC2</scope>
</reference>
<reference key="34">
    <citation type="journal article" date="2014" name="Cancer Res.">
        <title>Differential regulation of estrogen receptor alpha expression in breast cancer cells by metastasis-associated protein 1.</title>
        <authorList>
            <person name="Kang H.J."/>
            <person name="Lee M.H."/>
            <person name="Kang H.L."/>
            <person name="Kim S.H."/>
            <person name="Ahn J.R."/>
            <person name="Na H."/>
            <person name="Na T.Y."/>
            <person name="Kim Y.N."/>
            <person name="Seong J.K."/>
            <person name="Lee M.O."/>
        </authorList>
    </citation>
    <scope>FUNCTION</scope>
    <scope>INTERACTION WITH TFAP2C AND IFI16</scope>
    <scope>SUBCELLULAR LOCATION</scope>
    <scope>INVOLVEMENT IN BREAST CANCER</scope>
</reference>
<reference key="35">
    <citation type="journal article" date="2014" name="J. Proteomics">
        <title>An enzyme assisted RP-RPLC approach for in-depth analysis of human liver phosphoproteome.</title>
        <authorList>
            <person name="Bian Y."/>
            <person name="Song C."/>
            <person name="Cheng K."/>
            <person name="Dong M."/>
            <person name="Wang F."/>
            <person name="Huang J."/>
            <person name="Sun D."/>
            <person name="Wang L."/>
            <person name="Ye M."/>
            <person name="Zou H."/>
        </authorList>
    </citation>
    <scope>IDENTIFICATION BY MASS SPECTROMETRY [LARGE SCALE ANALYSIS]</scope>
    <source>
        <tissue>Liver</tissue>
    </source>
</reference>
<reference key="36">
    <citation type="journal article" date="2014" name="Oncotarget">
        <title>The subcellular distribution and function of MTA1 in cancer differentiation.</title>
        <authorList>
            <person name="Liu J."/>
            <person name="Xu D."/>
            <person name="Wang H."/>
            <person name="Zhang Y."/>
            <person name="Chang Y."/>
            <person name="Zhang J."/>
            <person name="Wang J."/>
            <person name="Li C."/>
            <person name="Liu H."/>
            <person name="Zhao M."/>
            <person name="Lin C."/>
            <person name="Zhan Q."/>
            <person name="Huang C."/>
            <person name="Qian H."/>
        </authorList>
    </citation>
    <scope>SUBCELLULAR LOCATION (ISOFORM LONG)</scope>
    <scope>TISSUE SPECIFICITY</scope>
    <scope>INTERACTION WITH TPR AND HDAC2</scope>
</reference>
<reference key="37">
    <citation type="journal article" date="2017" name="Nat. Struct. Mol. Biol.">
        <title>Site-specific mapping of the human SUMO proteome reveals co-modification with phosphorylation.</title>
        <authorList>
            <person name="Hendriks I.A."/>
            <person name="Lyon D."/>
            <person name="Young C."/>
            <person name="Jensen L.J."/>
            <person name="Vertegaal A.C."/>
            <person name="Nielsen M.L."/>
        </authorList>
    </citation>
    <scope>SUMOYLATION [LARGE SCALE ANALYSIS] AT LYS-549</scope>
    <scope>IDENTIFICATION BY MASS SPECTROMETRY [LARGE SCALE ANALYSIS]</scope>
</reference>
<reference key="38">
    <citation type="journal article" date="2017" name="Nucleic Acids Res.">
        <title>CHD3 and CHD4 form distinct NuRD complexes with different yet overlapping functionality.</title>
        <authorList>
            <person name="Hoffmeister H."/>
            <person name="Fuchs A."/>
            <person name="Erdel F."/>
            <person name="Pinz S."/>
            <person name="Groebner-Ferreira R."/>
            <person name="Bruckmann A."/>
            <person name="Deutzmann R."/>
            <person name="Schwartz U."/>
            <person name="Maldonado R."/>
            <person name="Huber C."/>
            <person name="Dendorfer A.S."/>
            <person name="Rippe K."/>
            <person name="Laengst G."/>
        </authorList>
    </citation>
    <scope>FUNCTION</scope>
    <scope>IDENTIFICATION IN THE NURD COMPLEX</scope>
    <scope>IDENTIFICATION BY MASS SPECTROMETRY</scope>
    <scope>SUBCELLULAR LOCATION</scope>
</reference>
<reference key="39">
    <citation type="journal article" date="2018" name="Nat. Commun.">
        <title>PWWP2A binds distinct chromatin moieties and interacts with an MTA1-specific core NuRD complex.</title>
        <authorList>
            <person name="Link S."/>
            <person name="Spitzer R.M.M."/>
            <person name="Sana M."/>
            <person name="Torrado M."/>
            <person name="Voelker-Albert M.C."/>
            <person name="Keilhauer E.C."/>
            <person name="Burgold T."/>
            <person name="Puenzeler S."/>
            <person name="Low J.K.K."/>
            <person name="Lindstroem I."/>
            <person name="Nist A."/>
            <person name="Regnard C."/>
            <person name="Stiewe T."/>
            <person name="Hendrich B."/>
            <person name="Imhof A."/>
            <person name="Mann M."/>
            <person name="Mackay J.P."/>
            <person name="Bartkuhn M."/>
            <person name="Hake S.B."/>
        </authorList>
    </citation>
    <scope>INTERACTION WITH PWWP2A</scope>
</reference>
<reference key="40">
    <citation type="journal article" date="2021" name="FEBS J.">
        <title>Cross-linking mass spectrometry reveals the structural topology of peripheral NuRD subunits relative to the core complex.</title>
        <authorList>
            <person name="Spruijt C.G."/>
            <person name="Graewe C."/>
            <person name="Kleinendorst S.C."/>
            <person name="Baltissen M.P.A."/>
            <person name="Vermeulen M."/>
        </authorList>
    </citation>
    <scope>IDENTIFICATION IN THE NURD COMPLEX</scope>
    <scope>IDENTIFICATION BY MASS SPECTROMETRY</scope>
    <scope>SUBCELLULAR LOCATION</scope>
</reference>
<reference evidence="33 34 35" key="41">
    <citation type="journal article" date="2014" name="J. Biol. Chem.">
        <title>Insight into the architecture of the NuRD complex: structure of the RbAp48-MTA1 subcomplex.</title>
        <authorList>
            <person name="Alqarni S.S."/>
            <person name="Murthy A."/>
            <person name="Zhang W."/>
            <person name="Przewloka M.R."/>
            <person name="Silva A.P."/>
            <person name="Watson A.A."/>
            <person name="Lejon S."/>
            <person name="Pei X.Y."/>
            <person name="Smits A.H."/>
            <person name="Kloet S.L."/>
            <person name="Wang H."/>
            <person name="Shepherd N.E."/>
            <person name="Stokes P.H."/>
            <person name="Blobel G.A."/>
            <person name="Vermeulen M."/>
            <person name="Glover D.M."/>
            <person name="Mackay J.P."/>
            <person name="Laue E.D."/>
        </authorList>
    </citation>
    <scope>X-RAY CRYSTALLOGRAPHY (2.15 ANGSTROMS) OF 670-695 IN COMPLEX WITH RBBP4</scope>
    <scope>INTERACTION WITH RBBP4</scope>
</reference>
<organism>
    <name type="scientific">Homo sapiens</name>
    <name type="common">Human</name>
    <dbReference type="NCBI Taxonomy" id="9606"/>
    <lineage>
        <taxon>Eukaryota</taxon>
        <taxon>Metazoa</taxon>
        <taxon>Chordata</taxon>
        <taxon>Craniata</taxon>
        <taxon>Vertebrata</taxon>
        <taxon>Euteleostomi</taxon>
        <taxon>Mammalia</taxon>
        <taxon>Eutheria</taxon>
        <taxon>Euarchontoglires</taxon>
        <taxon>Primates</taxon>
        <taxon>Haplorrhini</taxon>
        <taxon>Catarrhini</taxon>
        <taxon>Hominidae</taxon>
        <taxon>Homo</taxon>
    </lineage>
</organism>
<dbReference type="EMBL" id="U35113">
    <property type="protein sequence ID" value="AAA78935.1"/>
    <property type="molecule type" value="mRNA"/>
</dbReference>
<dbReference type="EMBL" id="AF508978">
    <property type="protein sequence ID" value="AAN01613.1"/>
    <property type="molecule type" value="mRNA"/>
</dbReference>
<dbReference type="EMBL" id="AL928654">
    <property type="status" value="NOT_ANNOTATED_CDS"/>
    <property type="molecule type" value="Genomic_DNA"/>
</dbReference>
<dbReference type="EMBL" id="BC009443">
    <property type="protein sequence ID" value="AAH09443.2"/>
    <property type="molecule type" value="mRNA"/>
</dbReference>
<dbReference type="EMBL" id="BC142941">
    <property type="protein sequence ID" value="AAI42942.1"/>
    <property type="molecule type" value="mRNA"/>
</dbReference>
<dbReference type="EMBL" id="BX248776">
    <property type="protein sequence ID" value="CAD66583.1"/>
    <property type="molecule type" value="mRNA"/>
</dbReference>
<dbReference type="CCDS" id="CCDS32169.1">
    <molecule id="Q13330-1"/>
</dbReference>
<dbReference type="CCDS" id="CCDS55954.1">
    <molecule id="Q13330-2"/>
</dbReference>
<dbReference type="CCDS" id="CCDS91957.1">
    <molecule id="Q13330-3"/>
</dbReference>
<dbReference type="RefSeq" id="NP_001190187.1">
    <molecule id="Q13330-2"/>
    <property type="nucleotide sequence ID" value="NM_001203258.2"/>
</dbReference>
<dbReference type="RefSeq" id="NP_001397991.1">
    <molecule id="Q13330-3"/>
    <property type="nucleotide sequence ID" value="NM_001411062.1"/>
</dbReference>
<dbReference type="RefSeq" id="NP_004680.2">
    <molecule id="Q13330-1"/>
    <property type="nucleotide sequence ID" value="NM_004689.4"/>
</dbReference>
<dbReference type="PDB" id="4BKX">
    <property type="method" value="X-ray"/>
    <property type="resolution" value="3.00 A"/>
    <property type="chains" value="A=162-335"/>
</dbReference>
<dbReference type="PDB" id="4PBY">
    <property type="method" value="X-ray"/>
    <property type="resolution" value="2.50 A"/>
    <property type="chains" value="C/D=656-686"/>
</dbReference>
<dbReference type="PDB" id="4PBZ">
    <property type="method" value="X-ray"/>
    <property type="resolution" value="2.15 A"/>
    <property type="chains" value="B=670-695"/>
</dbReference>
<dbReference type="PDB" id="4PC0">
    <property type="method" value="X-ray"/>
    <property type="resolution" value="2.50 A"/>
    <property type="chains" value="C/D=670-711"/>
</dbReference>
<dbReference type="PDB" id="5FXY">
    <property type="method" value="X-ray"/>
    <property type="resolution" value="3.20 A"/>
    <property type="chains" value="B/D/F/H=464-546"/>
</dbReference>
<dbReference type="PDB" id="5ICN">
    <property type="method" value="X-ray"/>
    <property type="resolution" value="3.30 A"/>
    <property type="chains" value="A=162-354"/>
</dbReference>
<dbReference type="PDB" id="6G16">
    <property type="method" value="X-ray"/>
    <property type="resolution" value="2.80 A"/>
    <property type="chains" value="B/D/F/H=464-546"/>
</dbReference>
<dbReference type="PDB" id="6ZRC">
    <property type="method" value="X-ray"/>
    <property type="resolution" value="2.60 A"/>
    <property type="chains" value="P/Q=677-689"/>
</dbReference>
<dbReference type="PDB" id="6ZRD">
    <property type="method" value="X-ray"/>
    <property type="resolution" value="2.50 A"/>
    <property type="chains" value="P/Q=677-689"/>
</dbReference>
<dbReference type="PDB" id="7AO8">
    <property type="method" value="EM"/>
    <property type="resolution" value="4.50 A"/>
    <property type="chains" value="A/D=1-715"/>
</dbReference>
<dbReference type="PDB" id="7AO9">
    <property type="method" value="EM"/>
    <property type="resolution" value="6.10 A"/>
    <property type="chains" value="A/D=1-715"/>
</dbReference>
<dbReference type="PDB" id="7AOA">
    <property type="method" value="EM"/>
    <property type="resolution" value="19.40 A"/>
    <property type="chains" value="A/D=1-715"/>
</dbReference>
<dbReference type="PDBsum" id="4BKX"/>
<dbReference type="PDBsum" id="4PBY"/>
<dbReference type="PDBsum" id="4PBZ"/>
<dbReference type="PDBsum" id="4PC0"/>
<dbReference type="PDBsum" id="5FXY"/>
<dbReference type="PDBsum" id="5ICN"/>
<dbReference type="PDBsum" id="6G16"/>
<dbReference type="PDBsum" id="6ZRC"/>
<dbReference type="PDBsum" id="6ZRD"/>
<dbReference type="PDBsum" id="7AO8"/>
<dbReference type="PDBsum" id="7AO9"/>
<dbReference type="PDBsum" id="7AOA"/>
<dbReference type="EMDB" id="EMD-11837"/>
<dbReference type="EMDB" id="EMD-11838"/>
<dbReference type="EMDB" id="EMD-11839"/>
<dbReference type="EMDB" id="EMD-3431"/>
<dbReference type="SMR" id="Q13330"/>
<dbReference type="BioGRID" id="114562">
    <property type="interactions" value="295"/>
</dbReference>
<dbReference type="ComplexPortal" id="CPX-880">
    <property type="entry name" value="MBD2/NuRD nucleosome remodeling and deacetylase complex"/>
</dbReference>
<dbReference type="ComplexPortal" id="CPX-922">
    <property type="entry name" value="MBD3/NuRD nucleosome remodeling and deacetylase complex"/>
</dbReference>
<dbReference type="CORUM" id="Q13330"/>
<dbReference type="DIP" id="DIP-41751N"/>
<dbReference type="FunCoup" id="Q13330">
    <property type="interactions" value="3379"/>
</dbReference>
<dbReference type="IntAct" id="Q13330">
    <property type="interactions" value="152"/>
</dbReference>
<dbReference type="MINT" id="Q13330"/>
<dbReference type="STRING" id="9606.ENSP00000333633"/>
<dbReference type="GlyCosmos" id="Q13330">
    <property type="glycosylation" value="1 site, 1 glycan"/>
</dbReference>
<dbReference type="GlyGen" id="Q13330">
    <property type="glycosylation" value="4 sites, 1 O-linked glycan (4 sites)"/>
</dbReference>
<dbReference type="iPTMnet" id="Q13330"/>
<dbReference type="PhosphoSitePlus" id="Q13330"/>
<dbReference type="SwissPalm" id="Q13330"/>
<dbReference type="BioMuta" id="MTA1"/>
<dbReference type="DMDM" id="259016275"/>
<dbReference type="CPTAC" id="CPTAC-1619"/>
<dbReference type="jPOST" id="Q13330"/>
<dbReference type="MassIVE" id="Q13330"/>
<dbReference type="PaxDb" id="9606-ENSP00000333633"/>
<dbReference type="PeptideAtlas" id="Q13330"/>
<dbReference type="ProteomicsDB" id="59317">
    <molecule id="Q13330-1"/>
</dbReference>
<dbReference type="ProteomicsDB" id="59318">
    <molecule id="Q13330-2"/>
</dbReference>
<dbReference type="ProteomicsDB" id="59319">
    <molecule id="Q13330-3"/>
</dbReference>
<dbReference type="Pumba" id="Q13330"/>
<dbReference type="ABCD" id="Q13330">
    <property type="antibodies" value="1 sequenced antibody"/>
</dbReference>
<dbReference type="Antibodypedia" id="90">
    <property type="antibodies" value="432 antibodies from 36 providers"/>
</dbReference>
<dbReference type="DNASU" id="9112"/>
<dbReference type="Ensembl" id="ENST00000331320.12">
    <molecule id="Q13330-1"/>
    <property type="protein sequence ID" value="ENSP00000333633.7"/>
    <property type="gene ID" value="ENSG00000182979.18"/>
</dbReference>
<dbReference type="Ensembl" id="ENST00000405646.5">
    <molecule id="Q13330-3"/>
    <property type="protein sequence ID" value="ENSP00000384180.1"/>
    <property type="gene ID" value="ENSG00000182979.18"/>
</dbReference>
<dbReference type="Ensembl" id="ENST00000438610.5">
    <molecule id="Q13330-2"/>
    <property type="protein sequence ID" value="ENSP00000393438.1"/>
    <property type="gene ID" value="ENSG00000182979.18"/>
</dbReference>
<dbReference type="GeneID" id="9112"/>
<dbReference type="KEGG" id="hsa:9112"/>
<dbReference type="MANE-Select" id="ENST00000331320.12">
    <property type="protein sequence ID" value="ENSP00000333633.7"/>
    <property type="RefSeq nucleotide sequence ID" value="NM_004689.4"/>
    <property type="RefSeq protein sequence ID" value="NP_004680.2"/>
</dbReference>
<dbReference type="UCSC" id="uc001yqx.4">
    <molecule id="Q13330-1"/>
    <property type="organism name" value="human"/>
</dbReference>
<dbReference type="AGR" id="HGNC:7410"/>
<dbReference type="CTD" id="9112"/>
<dbReference type="DisGeNET" id="9112"/>
<dbReference type="GeneCards" id="MTA1"/>
<dbReference type="HGNC" id="HGNC:7410">
    <property type="gene designation" value="MTA1"/>
</dbReference>
<dbReference type="HPA" id="ENSG00000182979">
    <property type="expression patterns" value="Low tissue specificity"/>
</dbReference>
<dbReference type="MIM" id="603526">
    <property type="type" value="gene"/>
</dbReference>
<dbReference type="neXtProt" id="NX_Q13330"/>
<dbReference type="OpenTargets" id="ENSG00000182979"/>
<dbReference type="PharmGKB" id="PA31218"/>
<dbReference type="VEuPathDB" id="HostDB:ENSG00000182979"/>
<dbReference type="eggNOG" id="KOG3554">
    <property type="taxonomic scope" value="Eukaryota"/>
</dbReference>
<dbReference type="GeneTree" id="ENSGT01030000234573"/>
<dbReference type="HOGENOM" id="CLU_006585_2_1_1"/>
<dbReference type="InParanoid" id="Q13330"/>
<dbReference type="OMA" id="PFWPINV"/>
<dbReference type="OrthoDB" id="2193595at2759"/>
<dbReference type="PAN-GO" id="Q13330">
    <property type="GO annotations" value="9 GO annotations based on evolutionary models"/>
</dbReference>
<dbReference type="PhylomeDB" id="Q13330"/>
<dbReference type="TreeFam" id="TF106444"/>
<dbReference type="PathwayCommons" id="Q13330"/>
<dbReference type="Reactome" id="R-HSA-3214815">
    <property type="pathway name" value="HDACs deacetylate histones"/>
</dbReference>
<dbReference type="Reactome" id="R-HSA-3232118">
    <property type="pathway name" value="SUMOylation of transcription factors"/>
</dbReference>
<dbReference type="Reactome" id="R-HSA-427389">
    <property type="pathway name" value="ERCC6 (CSB) and EHMT2 (G9a) positively regulate rRNA expression"/>
</dbReference>
<dbReference type="Reactome" id="R-HSA-73762">
    <property type="pathway name" value="RNA Polymerase I Transcription Initiation"/>
</dbReference>
<dbReference type="Reactome" id="R-HSA-8943724">
    <property type="pathway name" value="Regulation of PTEN gene transcription"/>
</dbReference>
<dbReference type="Reactome" id="R-HSA-9679191">
    <property type="pathway name" value="Potential therapeutics for SARS"/>
</dbReference>
<dbReference type="Reactome" id="R-HSA-9843940">
    <property type="pathway name" value="Regulation of endogenous retroelements by KRAB-ZFP proteins"/>
</dbReference>
<dbReference type="Reactome" id="R-HSA-9844594">
    <property type="pathway name" value="Transcriptional regulation of brown and beige adipocyte differentiation by EBF2"/>
</dbReference>
<dbReference type="Reactome" id="R-HSA-9845323">
    <property type="pathway name" value="Regulation of endogenous retroelements by Piwi-interacting RNAs (piRNAs)"/>
</dbReference>
<dbReference type="SignaLink" id="Q13330"/>
<dbReference type="SIGNOR" id="Q13330"/>
<dbReference type="BioGRID-ORCS" id="9112">
    <property type="hits" value="19 hits in 1177 CRISPR screens"/>
</dbReference>
<dbReference type="ChiTaRS" id="MTA1">
    <property type="organism name" value="human"/>
</dbReference>
<dbReference type="EvolutionaryTrace" id="Q13330"/>
<dbReference type="GeneWiki" id="MTA1"/>
<dbReference type="GenomeRNAi" id="9112"/>
<dbReference type="Pharos" id="Q13330">
    <property type="development level" value="Tbio"/>
</dbReference>
<dbReference type="PRO" id="PR:Q13330"/>
<dbReference type="Proteomes" id="UP000005640">
    <property type="component" value="Chromosome 14"/>
</dbReference>
<dbReference type="RNAct" id="Q13330">
    <property type="molecule type" value="protein"/>
</dbReference>
<dbReference type="Bgee" id="ENSG00000182979">
    <property type="expression patterns" value="Expressed in right uterine tube and 205 other cell types or tissues"/>
</dbReference>
<dbReference type="ExpressionAtlas" id="Q13330">
    <property type="expression patterns" value="baseline and differential"/>
</dbReference>
<dbReference type="GO" id="GO:0005737">
    <property type="term" value="C:cytoplasm"/>
    <property type="evidence" value="ECO:0000314"/>
    <property type="project" value="UniProtKB"/>
</dbReference>
<dbReference type="GO" id="GO:0005829">
    <property type="term" value="C:cytosol"/>
    <property type="evidence" value="ECO:0000314"/>
    <property type="project" value="HPA"/>
</dbReference>
<dbReference type="GO" id="GO:0043231">
    <property type="term" value="C:intracellular membrane-bounded organelle"/>
    <property type="evidence" value="ECO:0000314"/>
    <property type="project" value="HPA"/>
</dbReference>
<dbReference type="GO" id="GO:0005874">
    <property type="term" value="C:microtubule"/>
    <property type="evidence" value="ECO:0000314"/>
    <property type="project" value="UniProtKB"/>
</dbReference>
<dbReference type="GO" id="GO:0005635">
    <property type="term" value="C:nuclear envelope"/>
    <property type="evidence" value="ECO:0000314"/>
    <property type="project" value="UniProtKB"/>
</dbReference>
<dbReference type="GO" id="GO:0005654">
    <property type="term" value="C:nucleoplasm"/>
    <property type="evidence" value="ECO:0000314"/>
    <property type="project" value="HPA"/>
</dbReference>
<dbReference type="GO" id="GO:0005634">
    <property type="term" value="C:nucleus"/>
    <property type="evidence" value="ECO:0000314"/>
    <property type="project" value="UniProtKB"/>
</dbReference>
<dbReference type="GO" id="GO:0016581">
    <property type="term" value="C:NuRD complex"/>
    <property type="evidence" value="ECO:0000314"/>
    <property type="project" value="UniProtKB"/>
</dbReference>
<dbReference type="GO" id="GO:0003682">
    <property type="term" value="F:chromatin binding"/>
    <property type="evidence" value="ECO:0007669"/>
    <property type="project" value="InterPro"/>
</dbReference>
<dbReference type="GO" id="GO:0042826">
    <property type="term" value="F:histone deacetylase binding"/>
    <property type="evidence" value="ECO:0000318"/>
    <property type="project" value="GO_Central"/>
</dbReference>
<dbReference type="GO" id="GO:0000978">
    <property type="term" value="F:RNA polymerase II cis-regulatory region sequence-specific DNA binding"/>
    <property type="evidence" value="ECO:0000314"/>
    <property type="project" value="UniProtKB"/>
</dbReference>
<dbReference type="GO" id="GO:0061629">
    <property type="term" value="F:RNA polymerase II-specific DNA-binding transcription factor binding"/>
    <property type="evidence" value="ECO:0000353"/>
    <property type="project" value="BHF-UCL"/>
</dbReference>
<dbReference type="GO" id="GO:0003713">
    <property type="term" value="F:transcription coactivator activity"/>
    <property type="evidence" value="ECO:0000315"/>
    <property type="project" value="UniProtKB"/>
</dbReference>
<dbReference type="GO" id="GO:0003714">
    <property type="term" value="F:transcription corepressor activity"/>
    <property type="evidence" value="ECO:0000315"/>
    <property type="project" value="UniProtKB"/>
</dbReference>
<dbReference type="GO" id="GO:0008270">
    <property type="term" value="F:zinc ion binding"/>
    <property type="evidence" value="ECO:0007669"/>
    <property type="project" value="UniProtKB-KW"/>
</dbReference>
<dbReference type="GO" id="GO:0006338">
    <property type="term" value="P:chromatin remodeling"/>
    <property type="evidence" value="ECO:0000314"/>
    <property type="project" value="ComplexPortal"/>
</dbReference>
<dbReference type="GO" id="GO:0032922">
    <property type="term" value="P:circadian regulation of gene expression"/>
    <property type="evidence" value="ECO:0000250"/>
    <property type="project" value="UniProtKB"/>
</dbReference>
<dbReference type="GO" id="GO:0006302">
    <property type="term" value="P:double-strand break repair"/>
    <property type="evidence" value="ECO:0000315"/>
    <property type="project" value="UniProtKB"/>
</dbReference>
<dbReference type="GO" id="GO:0043153">
    <property type="term" value="P:entrainment of circadian clock by photoperiod"/>
    <property type="evidence" value="ECO:0000250"/>
    <property type="project" value="UniProtKB"/>
</dbReference>
<dbReference type="GO" id="GO:0045475">
    <property type="term" value="P:locomotor rhythm"/>
    <property type="evidence" value="ECO:0000250"/>
    <property type="project" value="UniProtKB"/>
</dbReference>
<dbReference type="GO" id="GO:0045892">
    <property type="term" value="P:negative regulation of DNA-templated transcription"/>
    <property type="evidence" value="ECO:0000303"/>
    <property type="project" value="ComplexPortal"/>
</dbReference>
<dbReference type="GO" id="GO:0045814">
    <property type="term" value="P:negative regulation of gene expression, epigenetic"/>
    <property type="evidence" value="ECO:0000315"/>
    <property type="project" value="UniProtKB"/>
</dbReference>
<dbReference type="GO" id="GO:0000122">
    <property type="term" value="P:negative regulation of transcription by RNA polymerase II"/>
    <property type="evidence" value="ECO:0000318"/>
    <property type="project" value="GO_Central"/>
</dbReference>
<dbReference type="GO" id="GO:0045893">
    <property type="term" value="P:positive regulation of DNA-templated transcription"/>
    <property type="evidence" value="ECO:0000303"/>
    <property type="project" value="ComplexPortal"/>
</dbReference>
<dbReference type="GO" id="GO:1902499">
    <property type="term" value="P:positive regulation of protein autoubiquitination"/>
    <property type="evidence" value="ECO:0000314"/>
    <property type="project" value="UniProtKB"/>
</dbReference>
<dbReference type="GO" id="GO:0043161">
    <property type="term" value="P:proteasome-mediated ubiquitin-dependent protein catabolic process"/>
    <property type="evidence" value="ECO:0000315"/>
    <property type="project" value="UniProtKB"/>
</dbReference>
<dbReference type="GO" id="GO:0042659">
    <property type="term" value="P:regulation of cell fate specification"/>
    <property type="evidence" value="ECO:0000303"/>
    <property type="project" value="ComplexPortal"/>
</dbReference>
<dbReference type="GO" id="GO:2000736">
    <property type="term" value="P:regulation of stem cell differentiation"/>
    <property type="evidence" value="ECO:0000303"/>
    <property type="project" value="ComplexPortal"/>
</dbReference>
<dbReference type="GO" id="GO:0010212">
    <property type="term" value="P:response to ionizing radiation"/>
    <property type="evidence" value="ECO:0000314"/>
    <property type="project" value="UniProtKB"/>
</dbReference>
<dbReference type="GO" id="GO:0007165">
    <property type="term" value="P:signal transduction"/>
    <property type="evidence" value="ECO:0000304"/>
    <property type="project" value="ProtInc"/>
</dbReference>
<dbReference type="CDD" id="cd04709">
    <property type="entry name" value="BAH_MTA"/>
    <property type="match status" value="1"/>
</dbReference>
<dbReference type="CDD" id="cd11661">
    <property type="entry name" value="SANT_MTA3_like"/>
    <property type="match status" value="1"/>
</dbReference>
<dbReference type="CDD" id="cd00202">
    <property type="entry name" value="ZnF_GATA"/>
    <property type="match status" value="1"/>
</dbReference>
<dbReference type="FunFam" id="1.10.10.60:FF:000012">
    <property type="entry name" value="Metastasis-associated 1 family, member 3"/>
    <property type="match status" value="1"/>
</dbReference>
<dbReference type="FunFam" id="2.30.30.490:FF:000001">
    <property type="entry name" value="Metastasis-associated 1 family, member 3"/>
    <property type="match status" value="1"/>
</dbReference>
<dbReference type="FunFam" id="4.10.1240.50:FF:000001">
    <property type="entry name" value="Metastasis-associated 1 family, member 3"/>
    <property type="match status" value="1"/>
</dbReference>
<dbReference type="Gene3D" id="2.30.30.490">
    <property type="match status" value="1"/>
</dbReference>
<dbReference type="Gene3D" id="4.10.1240.50">
    <property type="match status" value="1"/>
</dbReference>
<dbReference type="Gene3D" id="1.10.10.60">
    <property type="entry name" value="Homeodomain-like"/>
    <property type="match status" value="1"/>
</dbReference>
<dbReference type="IDEAL" id="IID00563"/>
<dbReference type="InterPro" id="IPR001025">
    <property type="entry name" value="BAH_dom"/>
</dbReference>
<dbReference type="InterPro" id="IPR043151">
    <property type="entry name" value="BAH_sf"/>
</dbReference>
<dbReference type="InterPro" id="IPR000949">
    <property type="entry name" value="ELM2_dom"/>
</dbReference>
<dbReference type="InterPro" id="IPR009057">
    <property type="entry name" value="Homeodomain-like_sf"/>
</dbReference>
<dbReference type="InterPro" id="IPR040138">
    <property type="entry name" value="MIER/MTA"/>
</dbReference>
<dbReference type="InterPro" id="IPR035170">
    <property type="entry name" value="MTA1_R1"/>
</dbReference>
<dbReference type="InterPro" id="IPR001005">
    <property type="entry name" value="SANT/Myb"/>
</dbReference>
<dbReference type="InterPro" id="IPR017884">
    <property type="entry name" value="SANT_dom"/>
</dbReference>
<dbReference type="InterPro" id="IPR000679">
    <property type="entry name" value="Znf_GATA"/>
</dbReference>
<dbReference type="PANTHER" id="PTHR10865">
    <property type="entry name" value="METASTASIS-ASSOCIATED PROTEIN AND MESODERM INDUCTION EARLY RESPONSE PROTEIN"/>
    <property type="match status" value="1"/>
</dbReference>
<dbReference type="PANTHER" id="PTHR10865:SF5">
    <property type="entry name" value="METASTASIS-ASSOCIATED PROTEIN MTA1"/>
    <property type="match status" value="1"/>
</dbReference>
<dbReference type="Pfam" id="PF01426">
    <property type="entry name" value="BAH"/>
    <property type="match status" value="1"/>
</dbReference>
<dbReference type="Pfam" id="PF01448">
    <property type="entry name" value="ELM2"/>
    <property type="match status" value="1"/>
</dbReference>
<dbReference type="Pfam" id="PF00320">
    <property type="entry name" value="GATA"/>
    <property type="match status" value="1"/>
</dbReference>
<dbReference type="Pfam" id="PF17226">
    <property type="entry name" value="MTA_R1"/>
    <property type="match status" value="1"/>
</dbReference>
<dbReference type="Pfam" id="PF00249">
    <property type="entry name" value="Myb_DNA-binding"/>
    <property type="match status" value="1"/>
</dbReference>
<dbReference type="SMART" id="SM00439">
    <property type="entry name" value="BAH"/>
    <property type="match status" value="1"/>
</dbReference>
<dbReference type="SMART" id="SM01189">
    <property type="entry name" value="ELM2"/>
    <property type="match status" value="1"/>
</dbReference>
<dbReference type="SMART" id="SM00717">
    <property type="entry name" value="SANT"/>
    <property type="match status" value="1"/>
</dbReference>
<dbReference type="SMART" id="SM00401">
    <property type="entry name" value="ZnF_GATA"/>
    <property type="match status" value="1"/>
</dbReference>
<dbReference type="SUPFAM" id="SSF46689">
    <property type="entry name" value="Homeodomain-like"/>
    <property type="match status" value="1"/>
</dbReference>
<dbReference type="PROSITE" id="PS51038">
    <property type="entry name" value="BAH"/>
    <property type="match status" value="1"/>
</dbReference>
<dbReference type="PROSITE" id="PS51156">
    <property type="entry name" value="ELM2"/>
    <property type="match status" value="1"/>
</dbReference>
<dbReference type="PROSITE" id="PS51293">
    <property type="entry name" value="SANT"/>
    <property type="match status" value="1"/>
</dbReference>
<gene>
    <name type="primary">MTA1</name>
</gene>